<sequence length="127" mass="13987">MSIPNNLRYSEEHEWVKTEGNEVVIGITHFAQGELGDIVFVELPEVGATIEANEPFGSVESVKTVSELYAPVSGKVVAVNEELSDQPELVNESPYEGAWMVKVELSDASQVEKLLTAEKYAEMTNQD</sequence>
<name>GCSH_BACC4</name>
<protein>
    <recommendedName>
        <fullName evidence="1">Glycine cleavage system H protein</fullName>
    </recommendedName>
    <alternativeName>
        <fullName evidence="1">Octanoyl/lipoyl carrier protein</fullName>
    </alternativeName>
</protein>
<organism>
    <name type="scientific">Bacillus cereus (strain B4264)</name>
    <dbReference type="NCBI Taxonomy" id="405532"/>
    <lineage>
        <taxon>Bacteria</taxon>
        <taxon>Bacillati</taxon>
        <taxon>Bacillota</taxon>
        <taxon>Bacilli</taxon>
        <taxon>Bacillales</taxon>
        <taxon>Bacillaceae</taxon>
        <taxon>Bacillus</taxon>
        <taxon>Bacillus cereus group</taxon>
    </lineage>
</organism>
<accession>B7HD14</accession>
<dbReference type="EMBL" id="CP001176">
    <property type="protein sequence ID" value="ACK59636.1"/>
    <property type="molecule type" value="Genomic_DNA"/>
</dbReference>
<dbReference type="RefSeq" id="WP_000026897.1">
    <property type="nucleotide sequence ID" value="NZ_VEHB01000013.1"/>
</dbReference>
<dbReference type="SMR" id="B7HD14"/>
<dbReference type="KEGG" id="bcb:BCB4264_A5135"/>
<dbReference type="HOGENOM" id="CLU_097408_2_2_9"/>
<dbReference type="Proteomes" id="UP000007096">
    <property type="component" value="Chromosome"/>
</dbReference>
<dbReference type="GO" id="GO:0005829">
    <property type="term" value="C:cytosol"/>
    <property type="evidence" value="ECO:0007669"/>
    <property type="project" value="TreeGrafter"/>
</dbReference>
<dbReference type="GO" id="GO:0005960">
    <property type="term" value="C:glycine cleavage complex"/>
    <property type="evidence" value="ECO:0007669"/>
    <property type="project" value="InterPro"/>
</dbReference>
<dbReference type="GO" id="GO:0019464">
    <property type="term" value="P:glycine decarboxylation via glycine cleavage system"/>
    <property type="evidence" value="ECO:0007669"/>
    <property type="project" value="UniProtKB-UniRule"/>
</dbReference>
<dbReference type="CDD" id="cd06848">
    <property type="entry name" value="GCS_H"/>
    <property type="match status" value="1"/>
</dbReference>
<dbReference type="Gene3D" id="2.40.50.100">
    <property type="match status" value="1"/>
</dbReference>
<dbReference type="HAMAP" id="MF_00272">
    <property type="entry name" value="GcvH"/>
    <property type="match status" value="1"/>
</dbReference>
<dbReference type="InterPro" id="IPR003016">
    <property type="entry name" value="2-oxoA_DH_lipoyl-BS"/>
</dbReference>
<dbReference type="InterPro" id="IPR000089">
    <property type="entry name" value="Biotin_lipoyl"/>
</dbReference>
<dbReference type="InterPro" id="IPR002930">
    <property type="entry name" value="GCV_H"/>
</dbReference>
<dbReference type="InterPro" id="IPR033753">
    <property type="entry name" value="GCV_H/Fam206"/>
</dbReference>
<dbReference type="InterPro" id="IPR017453">
    <property type="entry name" value="GCV_H_sub"/>
</dbReference>
<dbReference type="InterPro" id="IPR011053">
    <property type="entry name" value="Single_hybrid_motif"/>
</dbReference>
<dbReference type="NCBIfam" id="TIGR00527">
    <property type="entry name" value="gcvH"/>
    <property type="match status" value="1"/>
</dbReference>
<dbReference type="NCBIfam" id="NF002270">
    <property type="entry name" value="PRK01202.1"/>
    <property type="match status" value="1"/>
</dbReference>
<dbReference type="PANTHER" id="PTHR11715">
    <property type="entry name" value="GLYCINE CLEAVAGE SYSTEM H PROTEIN"/>
    <property type="match status" value="1"/>
</dbReference>
<dbReference type="PANTHER" id="PTHR11715:SF3">
    <property type="entry name" value="GLYCINE CLEAVAGE SYSTEM H PROTEIN-RELATED"/>
    <property type="match status" value="1"/>
</dbReference>
<dbReference type="Pfam" id="PF01597">
    <property type="entry name" value="GCV_H"/>
    <property type="match status" value="1"/>
</dbReference>
<dbReference type="SUPFAM" id="SSF51230">
    <property type="entry name" value="Single hybrid motif"/>
    <property type="match status" value="1"/>
</dbReference>
<dbReference type="PROSITE" id="PS50968">
    <property type="entry name" value="BIOTINYL_LIPOYL"/>
    <property type="match status" value="1"/>
</dbReference>
<dbReference type="PROSITE" id="PS00189">
    <property type="entry name" value="LIPOYL"/>
    <property type="match status" value="1"/>
</dbReference>
<keyword id="KW-0450">Lipoyl</keyword>
<reference key="1">
    <citation type="submission" date="2008-10" db="EMBL/GenBank/DDBJ databases">
        <title>Genome sequence of Bacillus cereus B4264.</title>
        <authorList>
            <person name="Dodson R.J."/>
            <person name="Durkin A.S."/>
            <person name="Rosovitz M.J."/>
            <person name="Rasko D.A."/>
            <person name="Hoffmaster A."/>
            <person name="Ravel J."/>
            <person name="Sutton G."/>
        </authorList>
    </citation>
    <scope>NUCLEOTIDE SEQUENCE [LARGE SCALE GENOMIC DNA]</scope>
    <source>
        <strain>B4264</strain>
    </source>
</reference>
<feature type="chain" id="PRO_1000119293" description="Glycine cleavage system H protein">
    <location>
        <begin position="1"/>
        <end position="127"/>
    </location>
</feature>
<feature type="domain" description="Lipoyl-binding" evidence="2">
    <location>
        <begin position="22"/>
        <end position="104"/>
    </location>
</feature>
<feature type="modified residue" description="N6-lipoyllysine" evidence="1">
    <location>
        <position position="63"/>
    </location>
</feature>
<proteinExistence type="inferred from homology"/>
<evidence type="ECO:0000255" key="1">
    <source>
        <dbReference type="HAMAP-Rule" id="MF_00272"/>
    </source>
</evidence>
<evidence type="ECO:0000255" key="2">
    <source>
        <dbReference type="PROSITE-ProRule" id="PRU01066"/>
    </source>
</evidence>
<comment type="function">
    <text evidence="1">The glycine cleavage system catalyzes the degradation of glycine. The H protein shuttles the methylamine group of glycine from the P protein to the T protein.</text>
</comment>
<comment type="function">
    <text evidence="1">Is also involved in protein lipoylation via its role as an octanoyl/lipoyl carrier protein intermediate.</text>
</comment>
<comment type="cofactor">
    <cofactor evidence="1">
        <name>(R)-lipoate</name>
        <dbReference type="ChEBI" id="CHEBI:83088"/>
    </cofactor>
    <text evidence="1">Binds 1 lipoyl cofactor covalently.</text>
</comment>
<comment type="subunit">
    <text evidence="1">The glycine cleavage system is composed of four proteins: P, T, L and H.</text>
</comment>
<comment type="similarity">
    <text evidence="1">Belongs to the GcvH family.</text>
</comment>
<gene>
    <name evidence="1" type="primary">gcvH</name>
    <name type="ordered locus">BCB4264_A5135</name>
</gene>